<organism>
    <name type="scientific">Burkholderia pseudomallei (strain 1106a)</name>
    <dbReference type="NCBI Taxonomy" id="357348"/>
    <lineage>
        <taxon>Bacteria</taxon>
        <taxon>Pseudomonadati</taxon>
        <taxon>Pseudomonadota</taxon>
        <taxon>Betaproteobacteria</taxon>
        <taxon>Burkholderiales</taxon>
        <taxon>Burkholderiaceae</taxon>
        <taxon>Burkholderia</taxon>
        <taxon>pseudomallei group</taxon>
    </lineage>
</organism>
<sequence length="206" mass="22866">MELKLLNSNGQEGAVVNASDVVFGRDYNEALIHQVVVAYQANARQGNRAQKDREQVKHTTKKPWRQKGTGRARAGMSSSPLWRGGGRIFPNSPDENFSHKVNKKMHRAGLCSIFSQLAREGRLSVVEDIVLEAPKTKLLADKFKAMGLDSVLVITDTVDENLYLASRNLPHVAVVEPRYADPLSLIYFKKVLVTKAAVAQIEELLS</sequence>
<reference key="1">
    <citation type="journal article" date="2010" name="Genome Biol. Evol.">
        <title>Continuing evolution of Burkholderia mallei through genome reduction and large-scale rearrangements.</title>
        <authorList>
            <person name="Losada L."/>
            <person name="Ronning C.M."/>
            <person name="DeShazer D."/>
            <person name="Woods D."/>
            <person name="Fedorova N."/>
            <person name="Kim H.S."/>
            <person name="Shabalina S.A."/>
            <person name="Pearson T.R."/>
            <person name="Brinkac L."/>
            <person name="Tan P."/>
            <person name="Nandi T."/>
            <person name="Crabtree J."/>
            <person name="Badger J."/>
            <person name="Beckstrom-Sternberg S."/>
            <person name="Saqib M."/>
            <person name="Schutzer S.E."/>
            <person name="Keim P."/>
            <person name="Nierman W.C."/>
        </authorList>
    </citation>
    <scope>NUCLEOTIDE SEQUENCE [LARGE SCALE GENOMIC DNA]</scope>
    <source>
        <strain>1106a</strain>
    </source>
</reference>
<protein>
    <recommendedName>
        <fullName evidence="1">Large ribosomal subunit protein uL4</fullName>
    </recommendedName>
    <alternativeName>
        <fullName evidence="3">50S ribosomal protein L4</fullName>
    </alternativeName>
</protein>
<proteinExistence type="inferred from homology"/>
<gene>
    <name evidence="1" type="primary">rplD</name>
    <name type="ordered locus">BURPS1106A_3803</name>
</gene>
<keyword id="KW-0687">Ribonucleoprotein</keyword>
<keyword id="KW-0689">Ribosomal protein</keyword>
<keyword id="KW-0694">RNA-binding</keyword>
<keyword id="KW-0699">rRNA-binding</keyword>
<name>RL4_BURP0</name>
<feature type="chain" id="PRO_1000052370" description="Large ribosomal subunit protein uL4">
    <location>
        <begin position="1"/>
        <end position="206"/>
    </location>
</feature>
<feature type="region of interest" description="Disordered" evidence="2">
    <location>
        <begin position="45"/>
        <end position="85"/>
    </location>
</feature>
<feature type="compositionally biased region" description="Basic residues" evidence="2">
    <location>
        <begin position="58"/>
        <end position="70"/>
    </location>
</feature>
<accession>A3P0B2</accession>
<comment type="function">
    <text evidence="1">One of the primary rRNA binding proteins, this protein initially binds near the 5'-end of the 23S rRNA. It is important during the early stages of 50S assembly. It makes multiple contacts with different domains of the 23S rRNA in the assembled 50S subunit and ribosome.</text>
</comment>
<comment type="function">
    <text evidence="1">Forms part of the polypeptide exit tunnel.</text>
</comment>
<comment type="subunit">
    <text evidence="1">Part of the 50S ribosomal subunit.</text>
</comment>
<comment type="similarity">
    <text evidence="1">Belongs to the universal ribosomal protein uL4 family.</text>
</comment>
<evidence type="ECO:0000255" key="1">
    <source>
        <dbReference type="HAMAP-Rule" id="MF_01328"/>
    </source>
</evidence>
<evidence type="ECO:0000256" key="2">
    <source>
        <dbReference type="SAM" id="MobiDB-lite"/>
    </source>
</evidence>
<evidence type="ECO:0000305" key="3"/>
<dbReference type="EMBL" id="CP000572">
    <property type="protein sequence ID" value="ABN91849.1"/>
    <property type="molecule type" value="Genomic_DNA"/>
</dbReference>
<dbReference type="RefSeq" id="WP_004199276.1">
    <property type="nucleotide sequence ID" value="NC_009076.1"/>
</dbReference>
<dbReference type="SMR" id="A3P0B2"/>
<dbReference type="GeneID" id="93061831"/>
<dbReference type="KEGG" id="bpl:BURPS1106A_3803"/>
<dbReference type="HOGENOM" id="CLU_041575_5_2_4"/>
<dbReference type="Proteomes" id="UP000006738">
    <property type="component" value="Chromosome I"/>
</dbReference>
<dbReference type="GO" id="GO:1990904">
    <property type="term" value="C:ribonucleoprotein complex"/>
    <property type="evidence" value="ECO:0007669"/>
    <property type="project" value="UniProtKB-KW"/>
</dbReference>
<dbReference type="GO" id="GO:0005840">
    <property type="term" value="C:ribosome"/>
    <property type="evidence" value="ECO:0007669"/>
    <property type="project" value="UniProtKB-KW"/>
</dbReference>
<dbReference type="GO" id="GO:0019843">
    <property type="term" value="F:rRNA binding"/>
    <property type="evidence" value="ECO:0007669"/>
    <property type="project" value="UniProtKB-UniRule"/>
</dbReference>
<dbReference type="GO" id="GO:0003735">
    <property type="term" value="F:structural constituent of ribosome"/>
    <property type="evidence" value="ECO:0007669"/>
    <property type="project" value="InterPro"/>
</dbReference>
<dbReference type="GO" id="GO:0006412">
    <property type="term" value="P:translation"/>
    <property type="evidence" value="ECO:0007669"/>
    <property type="project" value="UniProtKB-UniRule"/>
</dbReference>
<dbReference type="Gene3D" id="3.40.1370.10">
    <property type="match status" value="1"/>
</dbReference>
<dbReference type="HAMAP" id="MF_01328_B">
    <property type="entry name" value="Ribosomal_uL4_B"/>
    <property type="match status" value="1"/>
</dbReference>
<dbReference type="InterPro" id="IPR002136">
    <property type="entry name" value="Ribosomal_uL4"/>
</dbReference>
<dbReference type="InterPro" id="IPR013005">
    <property type="entry name" value="Ribosomal_uL4-like"/>
</dbReference>
<dbReference type="InterPro" id="IPR023574">
    <property type="entry name" value="Ribosomal_uL4_dom_sf"/>
</dbReference>
<dbReference type="NCBIfam" id="TIGR03953">
    <property type="entry name" value="rplD_bact"/>
    <property type="match status" value="1"/>
</dbReference>
<dbReference type="PANTHER" id="PTHR10746">
    <property type="entry name" value="50S RIBOSOMAL PROTEIN L4"/>
    <property type="match status" value="1"/>
</dbReference>
<dbReference type="PANTHER" id="PTHR10746:SF6">
    <property type="entry name" value="LARGE RIBOSOMAL SUBUNIT PROTEIN UL4M"/>
    <property type="match status" value="1"/>
</dbReference>
<dbReference type="Pfam" id="PF00573">
    <property type="entry name" value="Ribosomal_L4"/>
    <property type="match status" value="1"/>
</dbReference>
<dbReference type="SUPFAM" id="SSF52166">
    <property type="entry name" value="Ribosomal protein L4"/>
    <property type="match status" value="1"/>
</dbReference>